<reference key="1">
    <citation type="journal article" date="2009" name="PLoS Genet.">
        <title>Organised genome dynamics in the Escherichia coli species results in highly diverse adaptive paths.</title>
        <authorList>
            <person name="Touchon M."/>
            <person name="Hoede C."/>
            <person name="Tenaillon O."/>
            <person name="Barbe V."/>
            <person name="Baeriswyl S."/>
            <person name="Bidet P."/>
            <person name="Bingen E."/>
            <person name="Bonacorsi S."/>
            <person name="Bouchier C."/>
            <person name="Bouvet O."/>
            <person name="Calteau A."/>
            <person name="Chiapello H."/>
            <person name="Clermont O."/>
            <person name="Cruveiller S."/>
            <person name="Danchin A."/>
            <person name="Diard M."/>
            <person name="Dossat C."/>
            <person name="Karoui M.E."/>
            <person name="Frapy E."/>
            <person name="Garry L."/>
            <person name="Ghigo J.M."/>
            <person name="Gilles A.M."/>
            <person name="Johnson J."/>
            <person name="Le Bouguenec C."/>
            <person name="Lescat M."/>
            <person name="Mangenot S."/>
            <person name="Martinez-Jehanne V."/>
            <person name="Matic I."/>
            <person name="Nassif X."/>
            <person name="Oztas S."/>
            <person name="Petit M.A."/>
            <person name="Pichon C."/>
            <person name="Rouy Z."/>
            <person name="Ruf C.S."/>
            <person name="Schneider D."/>
            <person name="Tourret J."/>
            <person name="Vacherie B."/>
            <person name="Vallenet D."/>
            <person name="Medigue C."/>
            <person name="Rocha E.P.C."/>
            <person name="Denamur E."/>
        </authorList>
    </citation>
    <scope>NUCLEOTIDE SEQUENCE [LARGE SCALE GENOMIC DNA]</scope>
    <source>
        <strain>ATCC 35469 / DSM 13698 / BCRC 15582 / CCUG 18766 / IAM 14443 / JCM 21226 / LMG 7866 / NBRC 102419 / NCTC 12128 / CDC 0568-73</strain>
    </source>
</reference>
<accession>B7LR56</accession>
<comment type="function">
    <text evidence="1">Cell wall formation. Adds enolpyruvyl to UDP-N-acetylglucosamine.</text>
</comment>
<comment type="catalytic activity">
    <reaction evidence="1">
        <text>phosphoenolpyruvate + UDP-N-acetyl-alpha-D-glucosamine = UDP-N-acetyl-3-O-(1-carboxyvinyl)-alpha-D-glucosamine + phosphate</text>
        <dbReference type="Rhea" id="RHEA:18681"/>
        <dbReference type="ChEBI" id="CHEBI:43474"/>
        <dbReference type="ChEBI" id="CHEBI:57705"/>
        <dbReference type="ChEBI" id="CHEBI:58702"/>
        <dbReference type="ChEBI" id="CHEBI:68483"/>
        <dbReference type="EC" id="2.5.1.7"/>
    </reaction>
</comment>
<comment type="pathway">
    <text evidence="1">Cell wall biogenesis; peptidoglycan biosynthesis.</text>
</comment>
<comment type="subcellular location">
    <subcellularLocation>
        <location evidence="1">Cytoplasm</location>
    </subcellularLocation>
</comment>
<comment type="similarity">
    <text evidence="1">Belongs to the EPSP synthase family. MurA subfamily.</text>
</comment>
<sequence length="419" mass="44822">MDKFRVQGPTKLQGEVTISGAKNAALPILFAALLAEEPVEIQNVPKLKDVDTSMKLLSQLGAKVERNGSVHIDARDVNVFCAPYELVKTMRASIWALGPLVARFGQGQVSLPGGCSIGARPVDLHISGLEQLGATIKLEEGYVKASVEGRLKGAHIVMDKVSVGATVTIMCAATLAEGTTIIENAAREPEIVDTANFLVTLGAKISGQGTDRITIEGVERLGGGVYRVLPDRIETGTFLVAAAISRGKIICRNAQPDTLDAVLAKLRDAGADIETGDDWISLDMHGKRPKAVNVRTAPHPAFPTDMQAQFTLLNLVAEGTGFITETVFENRFMHVPELSRMGAHAEIESNTVICHGVEKLSGAQVMATDLRASASLVLAGCIAEGTTIVDRIYHIDRGYERIEDKLRALGANIERVKGE</sequence>
<protein>
    <recommendedName>
        <fullName evidence="1">UDP-N-acetylglucosamine 1-carboxyvinyltransferase</fullName>
        <ecNumber evidence="1">2.5.1.7</ecNumber>
    </recommendedName>
    <alternativeName>
        <fullName evidence="1">Enoylpyruvate transferase</fullName>
    </alternativeName>
    <alternativeName>
        <fullName evidence="1">UDP-N-acetylglucosamine enolpyruvyl transferase</fullName>
        <shortName evidence="1">EPT</shortName>
    </alternativeName>
</protein>
<proteinExistence type="inferred from homology"/>
<keyword id="KW-0131">Cell cycle</keyword>
<keyword id="KW-0132">Cell division</keyword>
<keyword id="KW-0133">Cell shape</keyword>
<keyword id="KW-0961">Cell wall biogenesis/degradation</keyword>
<keyword id="KW-0963">Cytoplasm</keyword>
<keyword id="KW-0573">Peptidoglycan synthesis</keyword>
<keyword id="KW-0670">Pyruvate</keyword>
<keyword id="KW-0808">Transferase</keyword>
<feature type="chain" id="PRO_1000117509" description="UDP-N-acetylglucosamine 1-carboxyvinyltransferase">
    <location>
        <begin position="1"/>
        <end position="419"/>
    </location>
</feature>
<feature type="active site" description="Proton donor" evidence="1">
    <location>
        <position position="115"/>
    </location>
</feature>
<feature type="binding site" evidence="1">
    <location>
        <begin position="22"/>
        <end position="23"/>
    </location>
    <ligand>
        <name>phosphoenolpyruvate</name>
        <dbReference type="ChEBI" id="CHEBI:58702"/>
    </ligand>
</feature>
<feature type="binding site" evidence="1">
    <location>
        <position position="91"/>
    </location>
    <ligand>
        <name>UDP-N-acetyl-alpha-D-glucosamine</name>
        <dbReference type="ChEBI" id="CHEBI:57705"/>
    </ligand>
</feature>
<feature type="binding site" evidence="1">
    <location>
        <begin position="120"/>
        <end position="124"/>
    </location>
    <ligand>
        <name>UDP-N-acetyl-alpha-D-glucosamine</name>
        <dbReference type="ChEBI" id="CHEBI:57705"/>
    </ligand>
</feature>
<feature type="binding site" evidence="1">
    <location>
        <begin position="160"/>
        <end position="163"/>
    </location>
    <ligand>
        <name>UDP-N-acetyl-alpha-D-glucosamine</name>
        <dbReference type="ChEBI" id="CHEBI:57705"/>
    </ligand>
</feature>
<feature type="binding site" evidence="1">
    <location>
        <position position="305"/>
    </location>
    <ligand>
        <name>UDP-N-acetyl-alpha-D-glucosamine</name>
        <dbReference type="ChEBI" id="CHEBI:57705"/>
    </ligand>
</feature>
<feature type="binding site" evidence="1">
    <location>
        <position position="327"/>
    </location>
    <ligand>
        <name>UDP-N-acetyl-alpha-D-glucosamine</name>
        <dbReference type="ChEBI" id="CHEBI:57705"/>
    </ligand>
</feature>
<feature type="modified residue" description="2-(S-cysteinyl)pyruvic acid O-phosphothioketal" evidence="1">
    <location>
        <position position="115"/>
    </location>
</feature>
<dbReference type="EC" id="2.5.1.7" evidence="1"/>
<dbReference type="EMBL" id="CU928158">
    <property type="protein sequence ID" value="CAQ90659.1"/>
    <property type="molecule type" value="Genomic_DNA"/>
</dbReference>
<dbReference type="RefSeq" id="WP_000357273.1">
    <property type="nucleotide sequence ID" value="NC_011740.1"/>
</dbReference>
<dbReference type="SMR" id="B7LR56"/>
<dbReference type="KEGG" id="efe:EFER_3166"/>
<dbReference type="HOGENOM" id="CLU_027387_0_0_6"/>
<dbReference type="OrthoDB" id="9803760at2"/>
<dbReference type="UniPathway" id="UPA00219"/>
<dbReference type="Proteomes" id="UP000000745">
    <property type="component" value="Chromosome"/>
</dbReference>
<dbReference type="GO" id="GO:0005737">
    <property type="term" value="C:cytoplasm"/>
    <property type="evidence" value="ECO:0007669"/>
    <property type="project" value="UniProtKB-SubCell"/>
</dbReference>
<dbReference type="GO" id="GO:0008760">
    <property type="term" value="F:UDP-N-acetylglucosamine 1-carboxyvinyltransferase activity"/>
    <property type="evidence" value="ECO:0007669"/>
    <property type="project" value="UniProtKB-UniRule"/>
</dbReference>
<dbReference type="GO" id="GO:0051301">
    <property type="term" value="P:cell division"/>
    <property type="evidence" value="ECO:0007669"/>
    <property type="project" value="UniProtKB-KW"/>
</dbReference>
<dbReference type="GO" id="GO:0071555">
    <property type="term" value="P:cell wall organization"/>
    <property type="evidence" value="ECO:0007669"/>
    <property type="project" value="UniProtKB-KW"/>
</dbReference>
<dbReference type="GO" id="GO:0009252">
    <property type="term" value="P:peptidoglycan biosynthetic process"/>
    <property type="evidence" value="ECO:0007669"/>
    <property type="project" value="UniProtKB-UniRule"/>
</dbReference>
<dbReference type="GO" id="GO:0008360">
    <property type="term" value="P:regulation of cell shape"/>
    <property type="evidence" value="ECO:0007669"/>
    <property type="project" value="UniProtKB-KW"/>
</dbReference>
<dbReference type="GO" id="GO:0019277">
    <property type="term" value="P:UDP-N-acetylgalactosamine biosynthetic process"/>
    <property type="evidence" value="ECO:0007669"/>
    <property type="project" value="InterPro"/>
</dbReference>
<dbReference type="CDD" id="cd01555">
    <property type="entry name" value="UdpNAET"/>
    <property type="match status" value="1"/>
</dbReference>
<dbReference type="FunFam" id="3.65.10.10:FF:000002">
    <property type="entry name" value="UDP-N-acetylglucosamine 1-carboxyvinyltransferase"/>
    <property type="match status" value="1"/>
</dbReference>
<dbReference type="Gene3D" id="3.65.10.10">
    <property type="entry name" value="Enolpyruvate transferase domain"/>
    <property type="match status" value="2"/>
</dbReference>
<dbReference type="HAMAP" id="MF_00111">
    <property type="entry name" value="MurA"/>
    <property type="match status" value="1"/>
</dbReference>
<dbReference type="InterPro" id="IPR001986">
    <property type="entry name" value="Enolpyruvate_Tfrase_dom"/>
</dbReference>
<dbReference type="InterPro" id="IPR036968">
    <property type="entry name" value="Enolpyruvate_Tfrase_sf"/>
</dbReference>
<dbReference type="InterPro" id="IPR050068">
    <property type="entry name" value="MurA_subfamily"/>
</dbReference>
<dbReference type="InterPro" id="IPR013792">
    <property type="entry name" value="RNA3'P_cycl/enolpyr_Trfase_a/b"/>
</dbReference>
<dbReference type="InterPro" id="IPR005750">
    <property type="entry name" value="UDP_GlcNAc_COvinyl_MurA"/>
</dbReference>
<dbReference type="NCBIfam" id="TIGR01072">
    <property type="entry name" value="murA"/>
    <property type="match status" value="1"/>
</dbReference>
<dbReference type="NCBIfam" id="NF006873">
    <property type="entry name" value="PRK09369.1"/>
    <property type="match status" value="1"/>
</dbReference>
<dbReference type="PANTHER" id="PTHR43783">
    <property type="entry name" value="UDP-N-ACETYLGLUCOSAMINE 1-CARBOXYVINYLTRANSFERASE"/>
    <property type="match status" value="1"/>
</dbReference>
<dbReference type="PANTHER" id="PTHR43783:SF1">
    <property type="entry name" value="UDP-N-ACETYLGLUCOSAMINE 1-CARBOXYVINYLTRANSFERASE"/>
    <property type="match status" value="1"/>
</dbReference>
<dbReference type="Pfam" id="PF00275">
    <property type="entry name" value="EPSP_synthase"/>
    <property type="match status" value="1"/>
</dbReference>
<dbReference type="SUPFAM" id="SSF55205">
    <property type="entry name" value="EPT/RTPC-like"/>
    <property type="match status" value="1"/>
</dbReference>
<organism>
    <name type="scientific">Escherichia fergusonii (strain ATCC 35469 / DSM 13698 / CCUG 18766 / IAM 14443 / JCM 21226 / LMG 7866 / NBRC 102419 / NCTC 12128 / CDC 0568-73)</name>
    <dbReference type="NCBI Taxonomy" id="585054"/>
    <lineage>
        <taxon>Bacteria</taxon>
        <taxon>Pseudomonadati</taxon>
        <taxon>Pseudomonadota</taxon>
        <taxon>Gammaproteobacteria</taxon>
        <taxon>Enterobacterales</taxon>
        <taxon>Enterobacteriaceae</taxon>
        <taxon>Escherichia</taxon>
    </lineage>
</organism>
<name>MURA_ESCF3</name>
<evidence type="ECO:0000255" key="1">
    <source>
        <dbReference type="HAMAP-Rule" id="MF_00111"/>
    </source>
</evidence>
<gene>
    <name evidence="1" type="primary">murA</name>
    <name type="ordered locus">EFER_3166</name>
</gene>